<dbReference type="EC" id="7.1.1.-" evidence="1"/>
<dbReference type="EMBL" id="CP000473">
    <property type="protein sequence ID" value="ABJ81135.1"/>
    <property type="molecule type" value="Genomic_DNA"/>
</dbReference>
<dbReference type="SMR" id="Q02CT1"/>
<dbReference type="FunCoup" id="Q02CT1">
    <property type="interactions" value="190"/>
</dbReference>
<dbReference type="STRING" id="234267.Acid_0120"/>
<dbReference type="KEGG" id="sus:Acid_0120"/>
<dbReference type="eggNOG" id="COG1007">
    <property type="taxonomic scope" value="Bacteria"/>
</dbReference>
<dbReference type="HOGENOM" id="CLU_007100_1_5_0"/>
<dbReference type="InParanoid" id="Q02CT1"/>
<dbReference type="OrthoDB" id="9807568at2"/>
<dbReference type="GO" id="GO:0005886">
    <property type="term" value="C:plasma membrane"/>
    <property type="evidence" value="ECO:0007669"/>
    <property type="project" value="UniProtKB-SubCell"/>
</dbReference>
<dbReference type="GO" id="GO:0008137">
    <property type="term" value="F:NADH dehydrogenase (ubiquinone) activity"/>
    <property type="evidence" value="ECO:0007669"/>
    <property type="project" value="InterPro"/>
</dbReference>
<dbReference type="GO" id="GO:0050136">
    <property type="term" value="F:NADH:ubiquinone reductase (non-electrogenic) activity"/>
    <property type="evidence" value="ECO:0007669"/>
    <property type="project" value="UniProtKB-UniRule"/>
</dbReference>
<dbReference type="GO" id="GO:0048038">
    <property type="term" value="F:quinone binding"/>
    <property type="evidence" value="ECO:0007669"/>
    <property type="project" value="UniProtKB-KW"/>
</dbReference>
<dbReference type="GO" id="GO:0042773">
    <property type="term" value="P:ATP synthesis coupled electron transport"/>
    <property type="evidence" value="ECO:0007669"/>
    <property type="project" value="InterPro"/>
</dbReference>
<dbReference type="HAMAP" id="MF_00445">
    <property type="entry name" value="NDH1_NuoN_1"/>
    <property type="match status" value="1"/>
</dbReference>
<dbReference type="InterPro" id="IPR010096">
    <property type="entry name" value="NADH-Q_OxRdtase_suN/2"/>
</dbReference>
<dbReference type="InterPro" id="IPR001750">
    <property type="entry name" value="ND/Mrp_TM"/>
</dbReference>
<dbReference type="NCBIfam" id="TIGR01770">
    <property type="entry name" value="NDH_I_N"/>
    <property type="match status" value="1"/>
</dbReference>
<dbReference type="PANTHER" id="PTHR22773">
    <property type="entry name" value="NADH DEHYDROGENASE"/>
    <property type="match status" value="1"/>
</dbReference>
<dbReference type="Pfam" id="PF00361">
    <property type="entry name" value="Proton_antipo_M"/>
    <property type="match status" value="1"/>
</dbReference>
<dbReference type="PRINTS" id="PR01434">
    <property type="entry name" value="NADHDHGNASE5"/>
</dbReference>
<evidence type="ECO:0000255" key="1">
    <source>
        <dbReference type="HAMAP-Rule" id="MF_00445"/>
    </source>
</evidence>
<gene>
    <name evidence="1" type="primary">nuoN1</name>
    <name type="ordered locus">Acid_0120</name>
</gene>
<proteinExistence type="inferred from homology"/>
<accession>Q02CT1</accession>
<name>NUON1_SOLUE</name>
<organism>
    <name type="scientific">Solibacter usitatus (strain Ellin6076)</name>
    <dbReference type="NCBI Taxonomy" id="234267"/>
    <lineage>
        <taxon>Bacteria</taxon>
        <taxon>Pseudomonadati</taxon>
        <taxon>Acidobacteriota</taxon>
        <taxon>Terriglobia</taxon>
        <taxon>Bryobacterales</taxon>
        <taxon>Solibacteraceae</taxon>
        <taxon>Candidatus Solibacter</taxon>
    </lineage>
</organism>
<reference key="1">
    <citation type="journal article" date="2009" name="Appl. Environ. Microbiol.">
        <title>Three genomes from the phylum Acidobacteria provide insight into the lifestyles of these microorganisms in soils.</title>
        <authorList>
            <person name="Ward N.L."/>
            <person name="Challacombe J.F."/>
            <person name="Janssen P.H."/>
            <person name="Henrissat B."/>
            <person name="Coutinho P.M."/>
            <person name="Wu M."/>
            <person name="Xie G."/>
            <person name="Haft D.H."/>
            <person name="Sait M."/>
            <person name="Badger J."/>
            <person name="Barabote R.D."/>
            <person name="Bradley B."/>
            <person name="Brettin T.S."/>
            <person name="Brinkac L.M."/>
            <person name="Bruce D."/>
            <person name="Creasy T."/>
            <person name="Daugherty S.C."/>
            <person name="Davidsen T.M."/>
            <person name="DeBoy R.T."/>
            <person name="Detter J.C."/>
            <person name="Dodson R.J."/>
            <person name="Durkin A.S."/>
            <person name="Ganapathy A."/>
            <person name="Gwinn-Giglio M."/>
            <person name="Han C.S."/>
            <person name="Khouri H."/>
            <person name="Kiss H."/>
            <person name="Kothari S.P."/>
            <person name="Madupu R."/>
            <person name="Nelson K.E."/>
            <person name="Nelson W.C."/>
            <person name="Paulsen I."/>
            <person name="Penn K."/>
            <person name="Ren Q."/>
            <person name="Rosovitz M.J."/>
            <person name="Selengut J.D."/>
            <person name="Shrivastava S."/>
            <person name="Sullivan S.A."/>
            <person name="Tapia R."/>
            <person name="Thompson L.S."/>
            <person name="Watkins K.L."/>
            <person name="Yang Q."/>
            <person name="Yu C."/>
            <person name="Zafar N."/>
            <person name="Zhou L."/>
            <person name="Kuske C.R."/>
        </authorList>
    </citation>
    <scope>NUCLEOTIDE SEQUENCE [LARGE SCALE GENOMIC DNA]</scope>
    <source>
        <strain>Ellin6076</strain>
    </source>
</reference>
<comment type="function">
    <text evidence="1">NDH-1 shuttles electrons from NADH, via FMN and iron-sulfur (Fe-S) centers, to quinones in the respiratory chain. The immediate electron acceptor for the enzyme in this species is believed to be ubiquinone. Couples the redox reaction to proton translocation (for every two electrons transferred, four hydrogen ions are translocated across the cytoplasmic membrane), and thus conserves the redox energy in a proton gradient.</text>
</comment>
<comment type="catalytic activity">
    <reaction evidence="1">
        <text>a quinone + NADH + 5 H(+)(in) = a quinol + NAD(+) + 4 H(+)(out)</text>
        <dbReference type="Rhea" id="RHEA:57888"/>
        <dbReference type="ChEBI" id="CHEBI:15378"/>
        <dbReference type="ChEBI" id="CHEBI:24646"/>
        <dbReference type="ChEBI" id="CHEBI:57540"/>
        <dbReference type="ChEBI" id="CHEBI:57945"/>
        <dbReference type="ChEBI" id="CHEBI:132124"/>
    </reaction>
</comment>
<comment type="subunit">
    <text evidence="1">NDH-1 is composed of 14 different subunits. Subunits NuoA, H, J, K, L, M, N constitute the membrane sector of the complex.</text>
</comment>
<comment type="subcellular location">
    <subcellularLocation>
        <location evidence="1">Cell inner membrane</location>
        <topology evidence="1">Multi-pass membrane protein</topology>
    </subcellularLocation>
</comment>
<comment type="similarity">
    <text evidence="1">Belongs to the complex I subunit 2 family.</text>
</comment>
<keyword id="KW-0997">Cell inner membrane</keyword>
<keyword id="KW-1003">Cell membrane</keyword>
<keyword id="KW-0472">Membrane</keyword>
<keyword id="KW-0520">NAD</keyword>
<keyword id="KW-0874">Quinone</keyword>
<keyword id="KW-1278">Translocase</keyword>
<keyword id="KW-0812">Transmembrane</keyword>
<keyword id="KW-1133">Transmembrane helix</keyword>
<keyword id="KW-0813">Transport</keyword>
<keyword id="KW-0830">Ubiquinone</keyword>
<protein>
    <recommendedName>
        <fullName evidence="1">NADH-quinone oxidoreductase subunit N 1</fullName>
        <ecNumber evidence="1">7.1.1.-</ecNumber>
    </recommendedName>
    <alternativeName>
        <fullName evidence="1">NADH dehydrogenase I subunit N 1</fullName>
    </alternativeName>
    <alternativeName>
        <fullName evidence="1">NDH-1 subunit N 1</fullName>
    </alternativeName>
</protein>
<sequence length="486" mass="52210">MPVSPAFNPQDALRFLPEIILTVMGTLLMVLDPVIHKRSSNAFGHISLIALVMALGASIYAYGIAGPAFGGMLMVDGFATFFRVVVITVGILTVFPSYRFLARQDAETSEYHALLLFSIAGQCLMAASNDLIMVFIGLEISSIASYVLAGYLRDDKRANEAALKYFLLGSFATGFFLYGVAWIYGLTRSVNLSVVRGVFQHQPVDPTFVGIAAALMFVGLAFKVSAAPFQIWAPDVYQGAPTPVSAFLSAGPKAAAFAIFLRIFMTAFEPISDKWQPLVWTAALASMCIGNFAAILQTNIKRMLAYSSIAHAGYVLVALTAHSETGVAAAMFYLAGYAFMNVGAFAAVSVLTGKGERYQNIDDFKGMGRKQPLAAAMFTIFLLSLLGVPLTGGFFGKFYIFKAALDSHLIWLTVLGLLNSAVGAYYYLRILVVMYMYEPGEAADAAEPLAPSLAFALILPALGTLALGIFPGWVLEFATKSAANLK</sequence>
<feature type="chain" id="PRO_0000391224" description="NADH-quinone oxidoreductase subunit N 1">
    <location>
        <begin position="1"/>
        <end position="486"/>
    </location>
</feature>
<feature type="transmembrane region" description="Helical" evidence="1">
    <location>
        <begin position="15"/>
        <end position="35"/>
    </location>
</feature>
<feature type="transmembrane region" description="Helical" evidence="1">
    <location>
        <begin position="46"/>
        <end position="66"/>
    </location>
</feature>
<feature type="transmembrane region" description="Helical" evidence="1">
    <location>
        <begin position="72"/>
        <end position="92"/>
    </location>
</feature>
<feature type="transmembrane region" description="Helical" evidence="1">
    <location>
        <begin position="111"/>
        <end position="128"/>
    </location>
</feature>
<feature type="transmembrane region" description="Helical" evidence="1">
    <location>
        <begin position="131"/>
        <end position="151"/>
    </location>
</feature>
<feature type="transmembrane region" description="Helical" evidence="1">
    <location>
        <begin position="166"/>
        <end position="186"/>
    </location>
</feature>
<feature type="transmembrane region" description="Helical" evidence="1">
    <location>
        <begin position="208"/>
        <end position="228"/>
    </location>
</feature>
<feature type="transmembrane region" description="Helical" evidence="1">
    <location>
        <begin position="241"/>
        <end position="261"/>
    </location>
</feature>
<feature type="transmembrane region" description="Helical" evidence="1">
    <location>
        <begin position="276"/>
        <end position="296"/>
    </location>
</feature>
<feature type="transmembrane region" description="Helical" evidence="1">
    <location>
        <begin position="303"/>
        <end position="323"/>
    </location>
</feature>
<feature type="transmembrane region" description="Helical" evidence="1">
    <location>
        <begin position="331"/>
        <end position="351"/>
    </location>
</feature>
<feature type="transmembrane region" description="Helical" evidence="1">
    <location>
        <begin position="375"/>
        <end position="395"/>
    </location>
</feature>
<feature type="transmembrane region" description="Helical" evidence="1">
    <location>
        <begin position="410"/>
        <end position="432"/>
    </location>
</feature>
<feature type="transmembrane region" description="Helical" evidence="1">
    <location>
        <begin position="455"/>
        <end position="475"/>
    </location>
</feature>